<dbReference type="EC" id="2.8.4.1" evidence="3"/>
<dbReference type="EMBL" id="U09990">
    <property type="protein sequence ID" value="AAA73438.1"/>
    <property type="molecule type" value="Genomic_DNA"/>
</dbReference>
<dbReference type="EMBL" id="AE000666">
    <property type="protein sequence ID" value="AAB85619.1"/>
    <property type="molecule type" value="Genomic_DNA"/>
</dbReference>
<dbReference type="PIR" id="T45149">
    <property type="entry name" value="T45149"/>
</dbReference>
<dbReference type="SMR" id="P21112"/>
<dbReference type="FunCoup" id="P21112">
    <property type="interactions" value="70"/>
</dbReference>
<dbReference type="IntAct" id="P21112">
    <property type="interactions" value="1"/>
</dbReference>
<dbReference type="STRING" id="187420.MTH_1130"/>
<dbReference type="PaxDb" id="187420-MTH_1130"/>
<dbReference type="EnsemblBacteria" id="AAB85619">
    <property type="protein sequence ID" value="AAB85619"/>
    <property type="gene ID" value="MTH_1130"/>
</dbReference>
<dbReference type="KEGG" id="mth:MTH_1130"/>
<dbReference type="PATRIC" id="fig|187420.15.peg.1107"/>
<dbReference type="HOGENOM" id="CLU_1092436_0_0_2"/>
<dbReference type="InParanoid" id="P21112"/>
<dbReference type="BioCyc" id="MetaCyc:MRTGMAUTO-MONOMER"/>
<dbReference type="UniPathway" id="UPA00646">
    <property type="reaction ID" value="UER00699"/>
</dbReference>
<dbReference type="Proteomes" id="UP000005223">
    <property type="component" value="Chromosome"/>
</dbReference>
<dbReference type="GO" id="GO:0050524">
    <property type="term" value="F:coenzyme-B sulfoethylthiotransferase activity"/>
    <property type="evidence" value="ECO:0007669"/>
    <property type="project" value="UniProtKB-EC"/>
</dbReference>
<dbReference type="GO" id="GO:0015948">
    <property type="term" value="P:methanogenesis"/>
    <property type="evidence" value="ECO:0007669"/>
    <property type="project" value="UniProtKB-KW"/>
</dbReference>
<dbReference type="CDD" id="cd00539">
    <property type="entry name" value="MCR_gamma"/>
    <property type="match status" value="1"/>
</dbReference>
<dbReference type="Gene3D" id="3.90.320.20">
    <property type="entry name" value="Methyl-coenzyme M reductase, gamma subunit"/>
    <property type="match status" value="1"/>
</dbReference>
<dbReference type="InterPro" id="IPR009024">
    <property type="entry name" value="Me_CoM_Rdtase_Fd-like_fold"/>
</dbReference>
<dbReference type="InterPro" id="IPR003178">
    <property type="entry name" value="Me_CoM_Rdtase_gsu"/>
</dbReference>
<dbReference type="InterPro" id="IPR036994">
    <property type="entry name" value="Me_CoM_Rdtase_gsu_sf"/>
</dbReference>
<dbReference type="NCBIfam" id="TIGR03259">
    <property type="entry name" value="met_CoM_red_gam"/>
    <property type="match status" value="1"/>
</dbReference>
<dbReference type="Pfam" id="PF02240">
    <property type="entry name" value="MCR_gamma"/>
    <property type="match status" value="1"/>
</dbReference>
<dbReference type="PIRSF" id="PIRSF000264">
    <property type="entry name" value="Meth_CoM_rd_gama"/>
    <property type="match status" value="1"/>
</dbReference>
<dbReference type="SUPFAM" id="SSF55088">
    <property type="entry name" value="Methyl-coenzyme M reductase subunits"/>
    <property type="match status" value="1"/>
</dbReference>
<name>MCRZ_METTH</name>
<protein>
    <recommendedName>
        <fullName evidence="4">Methyl-coenzyme M reductase II subunit gamma</fullName>
        <shortName evidence="4">MCR II gamma</shortName>
        <ecNumber evidence="3">2.8.4.1</ecNumber>
    </recommendedName>
    <alternativeName>
        <fullName>Coenzyme-B sulfoethylthiotransferase gamma</fullName>
    </alternativeName>
</protein>
<comment type="function">
    <text evidence="3">Component of the methyl-coenzyme M reductase (MCR) I that catalyzes the reductive cleavage of methyl-coenzyme M (CoM-S-CH3 or 2-(methylthio)ethanesulfonate) using coenzyme B (CoB or 7-mercaptoheptanoylthreonine phosphate) as reductant which results in the production of methane and the mixed heterodisulfide of CoB and CoM (CoM-S-S-CoB). This is the final step in methanogenesis.</text>
</comment>
<comment type="catalytic activity">
    <reaction evidence="3">
        <text>coenzyme B + methyl-coenzyme M = methane + coenzyme M-coenzyme B heterodisulfide</text>
        <dbReference type="Rhea" id="RHEA:12532"/>
        <dbReference type="ChEBI" id="CHEBI:16183"/>
        <dbReference type="ChEBI" id="CHEBI:58286"/>
        <dbReference type="ChEBI" id="CHEBI:58411"/>
        <dbReference type="ChEBI" id="CHEBI:58596"/>
        <dbReference type="EC" id="2.8.4.1"/>
    </reaction>
    <physiologicalReaction direction="left-to-right" evidence="6">
        <dbReference type="Rhea" id="RHEA:12533"/>
    </physiologicalReaction>
</comment>
<comment type="cofactor">
    <cofactor evidence="1">
        <name>coenzyme F430</name>
        <dbReference type="ChEBI" id="CHEBI:60540"/>
    </cofactor>
    <text evidence="1">Binds 2 coenzyme F430 non-covalently per MCR complex. Coenzyme F430 is a yellow nickel porphinoid. Methyl-coenzyme-M reductase is activated when the enzyme-bound coenzyme F430 is reduced to the Ni(I) oxidation state.</text>
</comment>
<comment type="pathway">
    <text evidence="6">One-carbon metabolism; methyl-coenzyme M reduction; methane from methyl-coenzyme M: step 1/1.</text>
</comment>
<comment type="subunit">
    <text evidence="3">MCR is a hexamer of two alpha, two beta, and two gamma chains, forming a dimer of heterotrimers.</text>
</comment>
<comment type="developmental stage">
    <text evidence="1">There are two MCR complexes in this bacteria. MCR II is expressed in the early growth phase. Late growth cells contain mostly MCR I.</text>
</comment>
<comment type="similarity">
    <text evidence="5">Belongs to the methyl-coenzyme M reductase gamma subunit family.</text>
</comment>
<feature type="initiator methionine" description="Removed" evidence="3">
    <location>
        <position position="1"/>
    </location>
</feature>
<feature type="chain" id="PRO_0000147480" description="Methyl-coenzyme M reductase II subunit gamma">
    <location>
        <begin position="2"/>
        <end position="265"/>
    </location>
</feature>
<feature type="binding site" evidence="2">
    <location>
        <position position="123"/>
    </location>
    <ligand>
        <name>coenzyme M</name>
        <dbReference type="ChEBI" id="CHEBI:58319"/>
    </ligand>
</feature>
<feature type="sequence conflict" description="In Ref. 1; AAA73438." evidence="5" ref="1">
    <original>D</original>
    <variation>V</variation>
    <location>
        <position position="132"/>
    </location>
</feature>
<feature type="sequence conflict" description="In Ref. 1; AAA73438." evidence="5" ref="1">
    <original>D</original>
    <variation>DD</variation>
    <location>
        <position position="230"/>
    </location>
</feature>
<gene>
    <name type="primary">mrtG</name>
    <name type="ordered locus">MTH_1130</name>
</gene>
<keyword id="KW-0903">Direct protein sequencing</keyword>
<keyword id="KW-0484">Methanogenesis</keyword>
<keyword id="KW-1185">Reference proteome</keyword>
<keyword id="KW-0808">Transferase</keyword>
<sequence length="265" mass="30567">MTYKAQYTPGETQIAENRRKHMDPDYEFRKLREVSDEDLVKVLGHRNPGESYKSVHPPLDEMDFEEDIVRDMVEPIQGAKEGVRVRYIQFADSMYNAPAQPYDRARTYMWRYRGVDTGTLSGRQVIEMRELDLEGVSKELVETELFDPATTGIRGATVHGHSLRLDENGLMFDALQRYVFDEEKGHVVYVKDQVGRPLDEPVDMGQPLGEDELKKITTIYRKDNIAMRDDKEAIEVVENIHTGRTMGGFGMDVFKDDLRKRLGDD</sequence>
<organism>
    <name type="scientific">Methanothermobacter thermautotrophicus (strain ATCC 29096 / DSM 1053 / JCM 10044 / NBRC 100330 / Delta H)</name>
    <name type="common">Methanobacterium thermoautotrophicum</name>
    <dbReference type="NCBI Taxonomy" id="187420"/>
    <lineage>
        <taxon>Archaea</taxon>
        <taxon>Methanobacteriati</taxon>
        <taxon>Methanobacteriota</taxon>
        <taxon>Methanomada group</taxon>
        <taxon>Methanobacteria</taxon>
        <taxon>Methanobacteriales</taxon>
        <taxon>Methanobacteriaceae</taxon>
        <taxon>Methanothermobacter</taxon>
    </lineage>
</organism>
<evidence type="ECO:0000250" key="1">
    <source>
        <dbReference type="UniProtKB" id="P11562"/>
    </source>
</evidence>
<evidence type="ECO:0000250" key="2">
    <source>
        <dbReference type="UniProtKB" id="P58816"/>
    </source>
</evidence>
<evidence type="ECO:0000269" key="3">
    <source>
    </source>
</evidence>
<evidence type="ECO:0000303" key="4">
    <source>
    </source>
</evidence>
<evidence type="ECO:0000305" key="5"/>
<evidence type="ECO:0000305" key="6">
    <source>
    </source>
</evidence>
<reference key="1">
    <citation type="journal article" date="1994" name="J. Bacteriol.">
        <title>Growth phase-dependent transcription of the genes that encode the two methyl coenzyme M reductase isoenzymes and N5-methyltetrahydromethanopterin:coenzyme M methyltransferase in Methanobacterium thermoautotrophicum delta H.</title>
        <authorList>
            <person name="Pihl T.D."/>
            <person name="Sharma S."/>
            <person name="Reeve J.N."/>
        </authorList>
    </citation>
    <scope>NUCLEOTIDE SEQUENCE [GENOMIC DNA]</scope>
    <source>
        <strain>ATCC 29096 / DSM 1053 / JCM 10044 / NBRC 100330 / Delta H</strain>
    </source>
</reference>
<reference key="2">
    <citation type="journal article" date="1997" name="J. Bacteriol.">
        <title>Complete genome sequence of Methanobacterium thermoautotrophicum deltaH: functional analysis and comparative genomics.</title>
        <authorList>
            <person name="Smith D.R."/>
            <person name="Doucette-Stamm L.A."/>
            <person name="Deloughery C."/>
            <person name="Lee H.-M."/>
            <person name="Dubois J."/>
            <person name="Aldredge T."/>
            <person name="Bashirzadeh R."/>
            <person name="Blakely D."/>
            <person name="Cook R."/>
            <person name="Gilbert K."/>
            <person name="Harrison D."/>
            <person name="Hoang L."/>
            <person name="Keagle P."/>
            <person name="Lumm W."/>
            <person name="Pothier B."/>
            <person name="Qiu D."/>
            <person name="Spadafora R."/>
            <person name="Vicare R."/>
            <person name="Wang Y."/>
            <person name="Wierzbowski J."/>
            <person name="Gibson R."/>
            <person name="Jiwani N."/>
            <person name="Caruso A."/>
            <person name="Bush D."/>
            <person name="Safer H."/>
            <person name="Patwell D."/>
            <person name="Prabhakar S."/>
            <person name="McDougall S."/>
            <person name="Shimer G."/>
            <person name="Goyal A."/>
            <person name="Pietrovski S."/>
            <person name="Church G.M."/>
            <person name="Daniels C.J."/>
            <person name="Mao J.-I."/>
            <person name="Rice P."/>
            <person name="Noelling J."/>
            <person name="Reeve J.N."/>
        </authorList>
    </citation>
    <scope>NUCLEOTIDE SEQUENCE [LARGE SCALE GENOMIC DNA]</scope>
    <source>
        <strain>ATCC 29096 / DSM 1053 / JCM 10044 / NBRC 100330 / Delta H</strain>
    </source>
</reference>
<reference key="3">
    <citation type="journal article" date="1990" name="Eur. J. Biochem.">
        <title>Two genetically distinct methyl-coenzyme M reductases in Methanobacterium thermoautotrophicum strain Marburg and delta H.</title>
        <authorList>
            <person name="Rospert S."/>
            <person name="Linder D."/>
            <person name="Ellermann J."/>
            <person name="Thauer R.K."/>
        </authorList>
    </citation>
    <scope>PROTEIN SEQUENCE OF 2-16</scope>
    <scope>FUNCTION</scope>
    <scope>CATALYTIC ACTIVITY</scope>
    <scope>SUBUNIT</scope>
    <source>
        <strain>ATCC 29096 / DSM 1053 / JCM 10044 / NBRC 100330 / Delta H</strain>
    </source>
</reference>
<accession>P21112</accession>
<accession>O27202</accession>
<accession>Q50486</accession>
<proteinExistence type="evidence at protein level"/>